<organism>
    <name type="scientific">Koribacter versatilis (strain Ellin345)</name>
    <dbReference type="NCBI Taxonomy" id="204669"/>
    <lineage>
        <taxon>Bacteria</taxon>
        <taxon>Pseudomonadati</taxon>
        <taxon>Acidobacteriota</taxon>
        <taxon>Terriglobia</taxon>
        <taxon>Terriglobales</taxon>
        <taxon>Candidatus Korobacteraceae</taxon>
        <taxon>Candidatus Korobacter</taxon>
    </lineage>
</organism>
<sequence length="500" mass="55218">MIDLKKFEVWFVTGSQHLYGPETLEKVAEHSREIAGGLDATPQMPVRVVFKPVLTTADAVHELCREANNAAHCIGLVTWMHTFSPAKMWIAGLKALQKPFLHLHTQYNRELPWATIDMDFMNLNQAAHGDREFGFIGSRMRLDRKVVVGFWQDLEVISELGTWARAAAGWHDAQHLKVARFGDNMRNVAVTEGDKVQAKIQLAYSVDGFGVGDLVARIHAASDRDVDHLVSEYEDTYTLSEPLTAKGKQRASLLDAARIELGLRHFLKDGNFHAFTDTFEDLHGLNQLPGIAVQRLMADGYGFGAEGDWKTAALVRTMKVMAAGLDAGTSFMEDYTYHLENGGLVLGAHMLEICPSIASGKPSCEIHPLSIGGKGDPVRLVFDSQTGPAVVATIVDVGERFRMVINKVNVIPPEVPLPKLPVARAVWIPEPNLAVAAACWIYAGGAHHTGFSLCLTAQHLQDYAEMAGIECVLIDNDTTVHACKNELRWNDAYYRLTGWR</sequence>
<proteinExistence type="inferred from homology"/>
<gene>
    <name evidence="1" type="primary">araA</name>
    <name type="ordered locus">Acid345_0326</name>
</gene>
<name>ARAA_KORVE</name>
<accession>Q1IUW9</accession>
<dbReference type="EC" id="5.3.1.4" evidence="1"/>
<dbReference type="EMBL" id="CP000360">
    <property type="protein sequence ID" value="ABF39331.1"/>
    <property type="molecule type" value="Genomic_DNA"/>
</dbReference>
<dbReference type="RefSeq" id="WP_011521133.1">
    <property type="nucleotide sequence ID" value="NC_008009.1"/>
</dbReference>
<dbReference type="SMR" id="Q1IUW9"/>
<dbReference type="STRING" id="204669.Acid345_0326"/>
<dbReference type="EnsemblBacteria" id="ABF39331">
    <property type="protein sequence ID" value="ABF39331"/>
    <property type="gene ID" value="Acid345_0326"/>
</dbReference>
<dbReference type="KEGG" id="aba:Acid345_0326"/>
<dbReference type="eggNOG" id="COG2160">
    <property type="taxonomic scope" value="Bacteria"/>
</dbReference>
<dbReference type="HOGENOM" id="CLU_045663_0_0_0"/>
<dbReference type="OrthoDB" id="9765600at2"/>
<dbReference type="UniPathway" id="UPA00145">
    <property type="reaction ID" value="UER00565"/>
</dbReference>
<dbReference type="Proteomes" id="UP000002432">
    <property type="component" value="Chromosome"/>
</dbReference>
<dbReference type="GO" id="GO:0005829">
    <property type="term" value="C:cytosol"/>
    <property type="evidence" value="ECO:0007669"/>
    <property type="project" value="TreeGrafter"/>
</dbReference>
<dbReference type="GO" id="GO:0008733">
    <property type="term" value="F:L-arabinose isomerase activity"/>
    <property type="evidence" value="ECO:0007669"/>
    <property type="project" value="UniProtKB-UniRule"/>
</dbReference>
<dbReference type="GO" id="GO:0030145">
    <property type="term" value="F:manganese ion binding"/>
    <property type="evidence" value="ECO:0007669"/>
    <property type="project" value="UniProtKB-UniRule"/>
</dbReference>
<dbReference type="GO" id="GO:0019569">
    <property type="term" value="P:L-arabinose catabolic process to xylulose 5-phosphate"/>
    <property type="evidence" value="ECO:0007669"/>
    <property type="project" value="UniProtKB-UniRule"/>
</dbReference>
<dbReference type="CDD" id="cd03557">
    <property type="entry name" value="L-arabinose_isomerase"/>
    <property type="match status" value="1"/>
</dbReference>
<dbReference type="Gene3D" id="3.40.50.10940">
    <property type="match status" value="1"/>
</dbReference>
<dbReference type="HAMAP" id="MF_00519">
    <property type="entry name" value="Arabinose_Isome"/>
    <property type="match status" value="1"/>
</dbReference>
<dbReference type="InterPro" id="IPR024664">
    <property type="entry name" value="Ara_Isoase_C"/>
</dbReference>
<dbReference type="InterPro" id="IPR055390">
    <property type="entry name" value="AraA_central"/>
</dbReference>
<dbReference type="InterPro" id="IPR055389">
    <property type="entry name" value="AraA_N"/>
</dbReference>
<dbReference type="InterPro" id="IPR038583">
    <property type="entry name" value="AraA_N_sf"/>
</dbReference>
<dbReference type="InterPro" id="IPR004216">
    <property type="entry name" value="Fuc/Ara_isomerase_C"/>
</dbReference>
<dbReference type="InterPro" id="IPR009015">
    <property type="entry name" value="Fucose_isomerase_N/cen_sf"/>
</dbReference>
<dbReference type="InterPro" id="IPR003762">
    <property type="entry name" value="Lara_isomerase"/>
</dbReference>
<dbReference type="NCBIfam" id="NF002795">
    <property type="entry name" value="PRK02929.1"/>
    <property type="match status" value="1"/>
</dbReference>
<dbReference type="PANTHER" id="PTHR38464">
    <property type="entry name" value="L-ARABINOSE ISOMERASE"/>
    <property type="match status" value="1"/>
</dbReference>
<dbReference type="PANTHER" id="PTHR38464:SF1">
    <property type="entry name" value="L-ARABINOSE ISOMERASE"/>
    <property type="match status" value="1"/>
</dbReference>
<dbReference type="Pfam" id="PF24856">
    <property type="entry name" value="AraA_central"/>
    <property type="match status" value="1"/>
</dbReference>
<dbReference type="Pfam" id="PF02610">
    <property type="entry name" value="AraA_N"/>
    <property type="match status" value="1"/>
</dbReference>
<dbReference type="Pfam" id="PF11762">
    <property type="entry name" value="Arabinose_Iso_C"/>
    <property type="match status" value="1"/>
</dbReference>
<dbReference type="PIRSF" id="PIRSF001478">
    <property type="entry name" value="L-ara_isomerase"/>
    <property type="match status" value="1"/>
</dbReference>
<dbReference type="SUPFAM" id="SSF50443">
    <property type="entry name" value="FucI/AraA C-terminal domain-like"/>
    <property type="match status" value="1"/>
</dbReference>
<dbReference type="SUPFAM" id="SSF53743">
    <property type="entry name" value="FucI/AraA N-terminal and middle domains"/>
    <property type="match status" value="1"/>
</dbReference>
<feature type="chain" id="PRO_0000259334" description="L-arabinose isomerase">
    <location>
        <begin position="1"/>
        <end position="500"/>
    </location>
</feature>
<feature type="binding site" evidence="1">
    <location>
        <position position="306"/>
    </location>
    <ligand>
        <name>Mn(2+)</name>
        <dbReference type="ChEBI" id="CHEBI:29035"/>
    </ligand>
</feature>
<feature type="binding site" evidence="1">
    <location>
        <position position="333"/>
    </location>
    <ligand>
        <name>Mn(2+)</name>
        <dbReference type="ChEBI" id="CHEBI:29035"/>
    </ligand>
</feature>
<feature type="binding site" evidence="1">
    <location>
        <position position="349"/>
    </location>
    <ligand>
        <name>Mn(2+)</name>
        <dbReference type="ChEBI" id="CHEBI:29035"/>
    </ligand>
</feature>
<feature type="binding site" evidence="1">
    <location>
        <position position="448"/>
    </location>
    <ligand>
        <name>Mn(2+)</name>
        <dbReference type="ChEBI" id="CHEBI:29035"/>
    </ligand>
</feature>
<protein>
    <recommendedName>
        <fullName evidence="1">L-arabinose isomerase</fullName>
        <ecNumber evidence="1">5.3.1.4</ecNumber>
    </recommendedName>
</protein>
<reference key="1">
    <citation type="journal article" date="2009" name="Appl. Environ. Microbiol.">
        <title>Three genomes from the phylum Acidobacteria provide insight into the lifestyles of these microorganisms in soils.</title>
        <authorList>
            <person name="Ward N.L."/>
            <person name="Challacombe J.F."/>
            <person name="Janssen P.H."/>
            <person name="Henrissat B."/>
            <person name="Coutinho P.M."/>
            <person name="Wu M."/>
            <person name="Xie G."/>
            <person name="Haft D.H."/>
            <person name="Sait M."/>
            <person name="Badger J."/>
            <person name="Barabote R.D."/>
            <person name="Bradley B."/>
            <person name="Brettin T.S."/>
            <person name="Brinkac L.M."/>
            <person name="Bruce D."/>
            <person name="Creasy T."/>
            <person name="Daugherty S.C."/>
            <person name="Davidsen T.M."/>
            <person name="DeBoy R.T."/>
            <person name="Detter J.C."/>
            <person name="Dodson R.J."/>
            <person name="Durkin A.S."/>
            <person name="Ganapathy A."/>
            <person name="Gwinn-Giglio M."/>
            <person name="Han C.S."/>
            <person name="Khouri H."/>
            <person name="Kiss H."/>
            <person name="Kothari S.P."/>
            <person name="Madupu R."/>
            <person name="Nelson K.E."/>
            <person name="Nelson W.C."/>
            <person name="Paulsen I."/>
            <person name="Penn K."/>
            <person name="Ren Q."/>
            <person name="Rosovitz M.J."/>
            <person name="Selengut J.D."/>
            <person name="Shrivastava S."/>
            <person name="Sullivan S.A."/>
            <person name="Tapia R."/>
            <person name="Thompson L.S."/>
            <person name="Watkins K.L."/>
            <person name="Yang Q."/>
            <person name="Yu C."/>
            <person name="Zafar N."/>
            <person name="Zhou L."/>
            <person name="Kuske C.R."/>
        </authorList>
    </citation>
    <scope>NUCLEOTIDE SEQUENCE [LARGE SCALE GENOMIC DNA]</scope>
    <source>
        <strain>Ellin345</strain>
    </source>
</reference>
<comment type="function">
    <text evidence="1">Catalyzes the conversion of L-arabinose to L-ribulose.</text>
</comment>
<comment type="catalytic activity">
    <reaction evidence="1">
        <text>beta-L-arabinopyranose = L-ribulose</text>
        <dbReference type="Rhea" id="RHEA:14821"/>
        <dbReference type="ChEBI" id="CHEBI:16880"/>
        <dbReference type="ChEBI" id="CHEBI:40886"/>
        <dbReference type="EC" id="5.3.1.4"/>
    </reaction>
</comment>
<comment type="cofactor">
    <cofactor evidence="1">
        <name>Mn(2+)</name>
        <dbReference type="ChEBI" id="CHEBI:29035"/>
    </cofactor>
    <text evidence="1">Binds 1 Mn(2+) ion per subunit.</text>
</comment>
<comment type="pathway">
    <text evidence="1">Carbohydrate degradation; L-arabinose degradation via L-ribulose; D-xylulose 5-phosphate from L-arabinose (bacterial route): step 1/3.</text>
</comment>
<comment type="similarity">
    <text evidence="1">Belongs to the arabinose isomerase family.</text>
</comment>
<evidence type="ECO:0000255" key="1">
    <source>
        <dbReference type="HAMAP-Rule" id="MF_00519"/>
    </source>
</evidence>
<keyword id="KW-0054">Arabinose catabolism</keyword>
<keyword id="KW-0119">Carbohydrate metabolism</keyword>
<keyword id="KW-0413">Isomerase</keyword>
<keyword id="KW-0464">Manganese</keyword>
<keyword id="KW-0479">Metal-binding</keyword>
<keyword id="KW-1185">Reference proteome</keyword>